<accession>Q0IJ01</accession>
<protein>
    <recommendedName>
        <fullName>Protein zwilch homolog</fullName>
    </recommendedName>
</protein>
<comment type="function">
    <text evidence="1">Essential component of the mitotic checkpoint, which prevents cells from prematurely exiting mitosis. Required for the assembly of the dynein-dynactin and mad1-mad2 complexes onto kinetochores (By similarity).</text>
</comment>
<comment type="subunit">
    <text evidence="1">Component of the RZZ complex composed of kntc1/rod, zw10 and zwilch.</text>
</comment>
<comment type="subcellular location">
    <subcellularLocation>
        <location evidence="1">Chromosome</location>
        <location evidence="1">Centromere</location>
        <location evidence="1">Kinetochore</location>
    </subcellularLocation>
</comment>
<comment type="similarity">
    <text evidence="2">Belongs to the ZWILCH family.</text>
</comment>
<name>ZWILC_XENTR</name>
<gene>
    <name type="primary">zwilch</name>
</gene>
<sequence>MWAERHRAAVELQQFLSSIYEQVKKGESLGPFQYKDDVQVHVVCDGHCKPLENFCSGSEVLYIMEKKPLTLEDNALDETENNEGISFYMSLQESPQPQAIPTMSARQFLTSYTLTHNPNMIQLNSGVPVKVLPPLWVRCDSSDAEGTCWLGAEPIKSNRNEITGMSFRTVTCAGPTADKSTFPSLDSLRQAHKERHYSSAMQTRGFAQYDLFGSNTVENSVIESQSSVTVDFVWNGVERILQLPPLTSAATLNIKVESGDLRSPVYSVYKELDFLLVLAEGLKTGVTEWPETSETKSAVDLVQHLLNDLKNKVDGLSTSVSKKDNEKIKSDTAAVDCSIQSFITERGDLDFAEMLWCKMRKSVSSYQDVVNCFSLVIQSLKHGEMHPWIHRGSSSTLSKLIQESYHGDMQSLSLTGLTPMRMLLEIGLDKMKKDYINCFIGQDLATFNYLDYFICTSVDLQEQVQRVKKLHHMLEVVVVCNAFLSLGHENLFPLTQSCLKYYKENPWNEQHVFQLPIRPSVISTFYQNSHPQTWRVEIISGHGQKEVKTTWQLTSRRPVDHVSFAVPDVPIDMTISGDNEELVYYPTQVSCSQVHFC</sequence>
<reference key="1">
    <citation type="submission" date="2006-08" db="EMBL/GenBank/DDBJ databases">
        <authorList>
            <consortium name="NIH - Xenopus Gene Collection (XGC) project"/>
        </authorList>
    </citation>
    <scope>NUCLEOTIDE SEQUENCE [LARGE SCALE MRNA]</scope>
    <source>
        <tissue>Testis</tissue>
    </source>
</reference>
<organism>
    <name type="scientific">Xenopus tropicalis</name>
    <name type="common">Western clawed frog</name>
    <name type="synonym">Silurana tropicalis</name>
    <dbReference type="NCBI Taxonomy" id="8364"/>
    <lineage>
        <taxon>Eukaryota</taxon>
        <taxon>Metazoa</taxon>
        <taxon>Chordata</taxon>
        <taxon>Craniata</taxon>
        <taxon>Vertebrata</taxon>
        <taxon>Euteleostomi</taxon>
        <taxon>Amphibia</taxon>
        <taxon>Batrachia</taxon>
        <taxon>Anura</taxon>
        <taxon>Pipoidea</taxon>
        <taxon>Pipidae</taxon>
        <taxon>Xenopodinae</taxon>
        <taxon>Xenopus</taxon>
        <taxon>Silurana</taxon>
    </lineage>
</organism>
<keyword id="KW-0131">Cell cycle</keyword>
<keyword id="KW-0132">Cell division</keyword>
<keyword id="KW-0137">Centromere</keyword>
<keyword id="KW-0158">Chromosome</keyword>
<keyword id="KW-0995">Kinetochore</keyword>
<keyword id="KW-0498">Mitosis</keyword>
<keyword id="KW-1185">Reference proteome</keyword>
<evidence type="ECO:0000250" key="1"/>
<evidence type="ECO:0000305" key="2"/>
<dbReference type="EMBL" id="BC121311">
    <property type="protein sequence ID" value="AAI21312.1"/>
    <property type="molecule type" value="mRNA"/>
</dbReference>
<dbReference type="RefSeq" id="NP_001016216.1">
    <property type="nucleotide sequence ID" value="NM_001016216.2"/>
</dbReference>
<dbReference type="SMR" id="Q0IJ01"/>
<dbReference type="FunCoup" id="Q0IJ01">
    <property type="interactions" value="990"/>
</dbReference>
<dbReference type="STRING" id="8364.ENSXETP00000007331"/>
<dbReference type="PaxDb" id="8364-ENSXETP00000034676"/>
<dbReference type="DNASU" id="548970"/>
<dbReference type="GeneID" id="548970"/>
<dbReference type="KEGG" id="xtr:548970"/>
<dbReference type="AGR" id="Xenbase:XB-GENE-5861097"/>
<dbReference type="CTD" id="55055"/>
<dbReference type="Xenbase" id="XB-GENE-5861097">
    <property type="gene designation" value="zwilch"/>
</dbReference>
<dbReference type="eggNOG" id="KOG4803">
    <property type="taxonomic scope" value="Eukaryota"/>
</dbReference>
<dbReference type="HOGENOM" id="CLU_466141_0_0_1"/>
<dbReference type="InParanoid" id="Q0IJ01"/>
<dbReference type="OMA" id="PARTTWF"/>
<dbReference type="OrthoDB" id="5556307at2759"/>
<dbReference type="PhylomeDB" id="Q0IJ01"/>
<dbReference type="Reactome" id="R-XTR-141444">
    <property type="pathway name" value="Amplification of signal from unattached kinetochores via a MAD2 inhibitory signal"/>
</dbReference>
<dbReference type="Reactome" id="R-XTR-2467813">
    <property type="pathway name" value="Separation of Sister Chromatids"/>
</dbReference>
<dbReference type="Reactome" id="R-XTR-2500257">
    <property type="pathway name" value="Resolution of Sister Chromatid Cohesion"/>
</dbReference>
<dbReference type="Reactome" id="R-XTR-5663220">
    <property type="pathway name" value="RHO GTPases Activate Formins"/>
</dbReference>
<dbReference type="Reactome" id="R-XTR-68877">
    <property type="pathway name" value="Mitotic Prometaphase"/>
</dbReference>
<dbReference type="Reactome" id="R-XTR-9648025">
    <property type="pathway name" value="EML4 and NUDC in mitotic spindle formation"/>
</dbReference>
<dbReference type="Proteomes" id="UP000008143">
    <property type="component" value="Chromosome 3"/>
</dbReference>
<dbReference type="GO" id="GO:1990423">
    <property type="term" value="C:RZZ complex"/>
    <property type="evidence" value="ECO:0007669"/>
    <property type="project" value="InterPro"/>
</dbReference>
<dbReference type="GO" id="GO:0051301">
    <property type="term" value="P:cell division"/>
    <property type="evidence" value="ECO:0007669"/>
    <property type="project" value="UniProtKB-KW"/>
</dbReference>
<dbReference type="GO" id="GO:0007094">
    <property type="term" value="P:mitotic spindle assembly checkpoint signaling"/>
    <property type="evidence" value="ECO:0000250"/>
    <property type="project" value="UniProtKB"/>
</dbReference>
<dbReference type="FunFam" id="1.10.287.1880:FF:000001">
    <property type="entry name" value="Protein zwilch homolog"/>
    <property type="match status" value="1"/>
</dbReference>
<dbReference type="FunFam" id="1.20.58.730:FF:000001">
    <property type="entry name" value="Protein zwilch homolog"/>
    <property type="match status" value="1"/>
</dbReference>
<dbReference type="FunFam" id="2.20.25.230:FF:000001">
    <property type="entry name" value="protein zwilch homolog isoform X1"/>
    <property type="match status" value="1"/>
</dbReference>
<dbReference type="Gene3D" id="1.10.287.1880">
    <property type="match status" value="1"/>
</dbReference>
<dbReference type="Gene3D" id="1.20.58.730">
    <property type="match status" value="1"/>
</dbReference>
<dbReference type="Gene3D" id="2.20.25.230">
    <property type="match status" value="1"/>
</dbReference>
<dbReference type="Gene3D" id="6.10.140.520">
    <property type="match status" value="1"/>
</dbReference>
<dbReference type="Gene3D" id="6.20.270.10">
    <property type="match status" value="1"/>
</dbReference>
<dbReference type="InterPro" id="IPR018630">
    <property type="entry name" value="Zwilch"/>
</dbReference>
<dbReference type="PANTHER" id="PTHR15995">
    <property type="entry name" value="PROTEIN ZWILCH HOMOLOG"/>
    <property type="match status" value="1"/>
</dbReference>
<dbReference type="PANTHER" id="PTHR15995:SF1">
    <property type="entry name" value="PROTEIN ZWILCH HOMOLOG"/>
    <property type="match status" value="1"/>
</dbReference>
<dbReference type="Pfam" id="PF09817">
    <property type="entry name" value="Zwilch"/>
    <property type="match status" value="1"/>
</dbReference>
<proteinExistence type="evidence at transcript level"/>
<feature type="chain" id="PRO_0000314805" description="Protein zwilch homolog">
    <location>
        <begin position="1"/>
        <end position="597"/>
    </location>
</feature>